<sequence length="362" mass="38861">MIGSFRDLGRRGLFLLDPETAHGMSIAALKSGLVPTCRVSNDPRLRQIVAGLDFANPLGMAAGYDKNAEVPEALLKLGFGFTEIGTVTPKPQPGNPRPRIFRLVEDEGVINRLGFNNEGHEAALRRLQPIRGNGIIGVNIGANKDSADRIADYVAGIRRFYSVARYFTANISSPNTPGLRDLQARESLSALLSAVLAARDDEAAKAGKKIPVFLKIAPDLTEEGMDDIAAEVLAHALDGLIVSNTTLSRDGLKDQVQAKEAGGLSGKPVFERSTVVLAKMRRRVGAALPIIGVGGVSSAETALEKIRAGADLVQLYSCMVYEGPGLPGRVVAGLSKLLDRERVASIRELRDSRLDYWADRKV</sequence>
<accession>B9J901</accession>
<protein>
    <recommendedName>
        <fullName evidence="1">Dihydroorotate dehydrogenase (quinone)</fullName>
        <ecNumber evidence="1">1.3.5.2</ecNumber>
    </recommendedName>
    <alternativeName>
        <fullName evidence="1">DHOdehase</fullName>
        <shortName evidence="1">DHOD</shortName>
        <shortName evidence="1">DHODase</shortName>
    </alternativeName>
    <alternativeName>
        <fullName evidence="1">Dihydroorotate oxidase</fullName>
    </alternativeName>
</protein>
<reference key="1">
    <citation type="journal article" date="2009" name="J. Bacteriol.">
        <title>Genome sequences of three Agrobacterium biovars help elucidate the evolution of multichromosome genomes in bacteria.</title>
        <authorList>
            <person name="Slater S.C."/>
            <person name="Goldman B.S."/>
            <person name="Goodner B."/>
            <person name="Setubal J.C."/>
            <person name="Farrand S.K."/>
            <person name="Nester E.W."/>
            <person name="Burr T.J."/>
            <person name="Banta L."/>
            <person name="Dickerman A.W."/>
            <person name="Paulsen I."/>
            <person name="Otten L."/>
            <person name="Suen G."/>
            <person name="Welch R."/>
            <person name="Almeida N.F."/>
            <person name="Arnold F."/>
            <person name="Burton O.T."/>
            <person name="Du Z."/>
            <person name="Ewing A."/>
            <person name="Godsy E."/>
            <person name="Heisel S."/>
            <person name="Houmiel K.L."/>
            <person name="Jhaveri J."/>
            <person name="Lu J."/>
            <person name="Miller N.M."/>
            <person name="Norton S."/>
            <person name="Chen Q."/>
            <person name="Phoolcharoen W."/>
            <person name="Ohlin V."/>
            <person name="Ondrusek D."/>
            <person name="Pride N."/>
            <person name="Stricklin S.L."/>
            <person name="Sun J."/>
            <person name="Wheeler C."/>
            <person name="Wilson L."/>
            <person name="Zhu H."/>
            <person name="Wood D.W."/>
        </authorList>
    </citation>
    <scope>NUCLEOTIDE SEQUENCE [LARGE SCALE GENOMIC DNA]</scope>
    <source>
        <strain>K84 / ATCC BAA-868</strain>
    </source>
</reference>
<name>PYRD_RHIR8</name>
<dbReference type="EC" id="1.3.5.2" evidence="1"/>
<dbReference type="EMBL" id="CP000628">
    <property type="protein sequence ID" value="ACM25403.1"/>
    <property type="molecule type" value="Genomic_DNA"/>
</dbReference>
<dbReference type="RefSeq" id="WP_007695610.1">
    <property type="nucleotide sequence ID" value="NC_011985.1"/>
</dbReference>
<dbReference type="SMR" id="B9J901"/>
<dbReference type="STRING" id="311403.Arad_0791"/>
<dbReference type="KEGG" id="ara:Arad_0791"/>
<dbReference type="eggNOG" id="COG0167">
    <property type="taxonomic scope" value="Bacteria"/>
</dbReference>
<dbReference type="HOGENOM" id="CLU_013640_2_1_5"/>
<dbReference type="UniPathway" id="UPA00070">
    <property type="reaction ID" value="UER00946"/>
</dbReference>
<dbReference type="Proteomes" id="UP000001600">
    <property type="component" value="Chromosome 1"/>
</dbReference>
<dbReference type="GO" id="GO:0005737">
    <property type="term" value="C:cytoplasm"/>
    <property type="evidence" value="ECO:0007669"/>
    <property type="project" value="InterPro"/>
</dbReference>
<dbReference type="GO" id="GO:0005886">
    <property type="term" value="C:plasma membrane"/>
    <property type="evidence" value="ECO:0007669"/>
    <property type="project" value="UniProtKB-SubCell"/>
</dbReference>
<dbReference type="GO" id="GO:0106430">
    <property type="term" value="F:dihydroorotate dehydrogenase (quinone) activity"/>
    <property type="evidence" value="ECO:0007669"/>
    <property type="project" value="UniProtKB-EC"/>
</dbReference>
<dbReference type="GO" id="GO:0006207">
    <property type="term" value="P:'de novo' pyrimidine nucleobase biosynthetic process"/>
    <property type="evidence" value="ECO:0007669"/>
    <property type="project" value="InterPro"/>
</dbReference>
<dbReference type="GO" id="GO:0044205">
    <property type="term" value="P:'de novo' UMP biosynthetic process"/>
    <property type="evidence" value="ECO:0007669"/>
    <property type="project" value="UniProtKB-UniRule"/>
</dbReference>
<dbReference type="CDD" id="cd04738">
    <property type="entry name" value="DHOD_2_like"/>
    <property type="match status" value="1"/>
</dbReference>
<dbReference type="Gene3D" id="3.20.20.70">
    <property type="entry name" value="Aldolase class I"/>
    <property type="match status" value="1"/>
</dbReference>
<dbReference type="HAMAP" id="MF_00225">
    <property type="entry name" value="DHO_dh_type2"/>
    <property type="match status" value="1"/>
</dbReference>
<dbReference type="InterPro" id="IPR013785">
    <property type="entry name" value="Aldolase_TIM"/>
</dbReference>
<dbReference type="InterPro" id="IPR050074">
    <property type="entry name" value="DHO_dehydrogenase"/>
</dbReference>
<dbReference type="InterPro" id="IPR005719">
    <property type="entry name" value="Dihydroorotate_DH_2"/>
</dbReference>
<dbReference type="InterPro" id="IPR005720">
    <property type="entry name" value="Dihydroorotate_DH_cat"/>
</dbReference>
<dbReference type="InterPro" id="IPR001295">
    <property type="entry name" value="Dihydroorotate_DH_CS"/>
</dbReference>
<dbReference type="NCBIfam" id="NF003645">
    <property type="entry name" value="PRK05286.1-2"/>
    <property type="match status" value="1"/>
</dbReference>
<dbReference type="NCBIfam" id="NF003652">
    <property type="entry name" value="PRK05286.2-5"/>
    <property type="match status" value="1"/>
</dbReference>
<dbReference type="NCBIfam" id="TIGR01036">
    <property type="entry name" value="pyrD_sub2"/>
    <property type="match status" value="1"/>
</dbReference>
<dbReference type="PANTHER" id="PTHR48109:SF4">
    <property type="entry name" value="DIHYDROOROTATE DEHYDROGENASE (QUINONE), MITOCHONDRIAL"/>
    <property type="match status" value="1"/>
</dbReference>
<dbReference type="PANTHER" id="PTHR48109">
    <property type="entry name" value="DIHYDROOROTATE DEHYDROGENASE (QUINONE), MITOCHONDRIAL-RELATED"/>
    <property type="match status" value="1"/>
</dbReference>
<dbReference type="Pfam" id="PF01180">
    <property type="entry name" value="DHO_dh"/>
    <property type="match status" value="1"/>
</dbReference>
<dbReference type="SUPFAM" id="SSF51395">
    <property type="entry name" value="FMN-linked oxidoreductases"/>
    <property type="match status" value="1"/>
</dbReference>
<dbReference type="PROSITE" id="PS00911">
    <property type="entry name" value="DHODEHASE_1"/>
    <property type="match status" value="1"/>
</dbReference>
<dbReference type="PROSITE" id="PS00912">
    <property type="entry name" value="DHODEHASE_2"/>
    <property type="match status" value="1"/>
</dbReference>
<gene>
    <name evidence="1" type="primary">pyrD</name>
    <name type="ordered locus">Arad_0791</name>
</gene>
<feature type="chain" id="PRO_1000195058" description="Dihydroorotate dehydrogenase (quinone)">
    <location>
        <begin position="1"/>
        <end position="362"/>
    </location>
</feature>
<feature type="active site" description="Nucleophile" evidence="1">
    <location>
        <position position="173"/>
    </location>
</feature>
<feature type="binding site" evidence="1">
    <location>
        <begin position="62"/>
        <end position="66"/>
    </location>
    <ligand>
        <name>FMN</name>
        <dbReference type="ChEBI" id="CHEBI:58210"/>
    </ligand>
</feature>
<feature type="binding site" evidence="1">
    <location>
        <position position="66"/>
    </location>
    <ligand>
        <name>substrate</name>
    </ligand>
</feature>
<feature type="binding site" evidence="1">
    <location>
        <position position="86"/>
    </location>
    <ligand>
        <name>FMN</name>
        <dbReference type="ChEBI" id="CHEBI:58210"/>
    </ligand>
</feature>
<feature type="binding site" evidence="1">
    <location>
        <begin position="111"/>
        <end position="115"/>
    </location>
    <ligand>
        <name>substrate</name>
    </ligand>
</feature>
<feature type="binding site" evidence="1">
    <location>
        <position position="139"/>
    </location>
    <ligand>
        <name>FMN</name>
        <dbReference type="ChEBI" id="CHEBI:58210"/>
    </ligand>
</feature>
<feature type="binding site" evidence="1">
    <location>
        <position position="170"/>
    </location>
    <ligand>
        <name>FMN</name>
        <dbReference type="ChEBI" id="CHEBI:58210"/>
    </ligand>
</feature>
<feature type="binding site" evidence="1">
    <location>
        <position position="170"/>
    </location>
    <ligand>
        <name>substrate</name>
    </ligand>
</feature>
<feature type="binding site" evidence="1">
    <location>
        <position position="175"/>
    </location>
    <ligand>
        <name>substrate</name>
    </ligand>
</feature>
<feature type="binding site" evidence="1">
    <location>
        <position position="215"/>
    </location>
    <ligand>
        <name>FMN</name>
        <dbReference type="ChEBI" id="CHEBI:58210"/>
    </ligand>
</feature>
<feature type="binding site" evidence="1">
    <location>
        <position position="243"/>
    </location>
    <ligand>
        <name>FMN</name>
        <dbReference type="ChEBI" id="CHEBI:58210"/>
    </ligand>
</feature>
<feature type="binding site" evidence="1">
    <location>
        <begin position="244"/>
        <end position="245"/>
    </location>
    <ligand>
        <name>substrate</name>
    </ligand>
</feature>
<feature type="binding site" evidence="1">
    <location>
        <position position="266"/>
    </location>
    <ligand>
        <name>FMN</name>
        <dbReference type="ChEBI" id="CHEBI:58210"/>
    </ligand>
</feature>
<feature type="binding site" evidence="1">
    <location>
        <position position="295"/>
    </location>
    <ligand>
        <name>FMN</name>
        <dbReference type="ChEBI" id="CHEBI:58210"/>
    </ligand>
</feature>
<feature type="binding site" evidence="1">
    <location>
        <begin position="316"/>
        <end position="317"/>
    </location>
    <ligand>
        <name>FMN</name>
        <dbReference type="ChEBI" id="CHEBI:58210"/>
    </ligand>
</feature>
<comment type="function">
    <text evidence="1">Catalyzes the conversion of dihydroorotate to orotate with quinone as electron acceptor.</text>
</comment>
<comment type="catalytic activity">
    <reaction evidence="1">
        <text>(S)-dihydroorotate + a quinone = orotate + a quinol</text>
        <dbReference type="Rhea" id="RHEA:30187"/>
        <dbReference type="ChEBI" id="CHEBI:24646"/>
        <dbReference type="ChEBI" id="CHEBI:30839"/>
        <dbReference type="ChEBI" id="CHEBI:30864"/>
        <dbReference type="ChEBI" id="CHEBI:132124"/>
        <dbReference type="EC" id="1.3.5.2"/>
    </reaction>
</comment>
<comment type="cofactor">
    <cofactor evidence="1">
        <name>FMN</name>
        <dbReference type="ChEBI" id="CHEBI:58210"/>
    </cofactor>
    <text evidence="1">Binds 1 FMN per subunit.</text>
</comment>
<comment type="pathway">
    <text evidence="1">Pyrimidine metabolism; UMP biosynthesis via de novo pathway; orotate from (S)-dihydroorotate (quinone route): step 1/1.</text>
</comment>
<comment type="subunit">
    <text evidence="1">Monomer.</text>
</comment>
<comment type="subcellular location">
    <subcellularLocation>
        <location evidence="1">Cell membrane</location>
        <topology evidence="1">Peripheral membrane protein</topology>
    </subcellularLocation>
</comment>
<comment type="similarity">
    <text evidence="1">Belongs to the dihydroorotate dehydrogenase family. Type 2 subfamily.</text>
</comment>
<keyword id="KW-1003">Cell membrane</keyword>
<keyword id="KW-0285">Flavoprotein</keyword>
<keyword id="KW-0288">FMN</keyword>
<keyword id="KW-0472">Membrane</keyword>
<keyword id="KW-0560">Oxidoreductase</keyword>
<keyword id="KW-0665">Pyrimidine biosynthesis</keyword>
<organism>
    <name type="scientific">Rhizobium rhizogenes (strain K84 / ATCC BAA-868)</name>
    <name type="common">Agrobacterium radiobacter</name>
    <dbReference type="NCBI Taxonomy" id="311403"/>
    <lineage>
        <taxon>Bacteria</taxon>
        <taxon>Pseudomonadati</taxon>
        <taxon>Pseudomonadota</taxon>
        <taxon>Alphaproteobacteria</taxon>
        <taxon>Hyphomicrobiales</taxon>
        <taxon>Rhizobiaceae</taxon>
        <taxon>Rhizobium/Agrobacterium group</taxon>
        <taxon>Rhizobium</taxon>
    </lineage>
</organism>
<evidence type="ECO:0000255" key="1">
    <source>
        <dbReference type="HAMAP-Rule" id="MF_00225"/>
    </source>
</evidence>
<proteinExistence type="inferred from homology"/>